<reference key="1">
    <citation type="journal article" date="2008" name="Genome Res.">
        <title>Genome sequence of the beta-rhizobium Cupriavidus taiwanensis and comparative genomics of rhizobia.</title>
        <authorList>
            <person name="Amadou C."/>
            <person name="Pascal G."/>
            <person name="Mangenot S."/>
            <person name="Glew M."/>
            <person name="Bontemps C."/>
            <person name="Capela D."/>
            <person name="Carrere S."/>
            <person name="Cruveiller S."/>
            <person name="Dossat C."/>
            <person name="Lajus A."/>
            <person name="Marchetti M."/>
            <person name="Poinsot V."/>
            <person name="Rouy Z."/>
            <person name="Servin B."/>
            <person name="Saad M."/>
            <person name="Schenowitz C."/>
            <person name="Barbe V."/>
            <person name="Batut J."/>
            <person name="Medigue C."/>
            <person name="Masson-Boivin C."/>
        </authorList>
    </citation>
    <scope>NUCLEOTIDE SEQUENCE [LARGE SCALE GENOMIC DNA]</scope>
    <source>
        <strain>DSM 17343 / BCRC 17206 / CCUG 44338 / CIP 107171 / LMG 19424 / R1</strain>
    </source>
</reference>
<dbReference type="EC" id="2.7.7.6" evidence="1"/>
<dbReference type="EMBL" id="CU633749">
    <property type="protein sequence ID" value="CAQ70843.1"/>
    <property type="molecule type" value="Genomic_DNA"/>
</dbReference>
<dbReference type="RefSeq" id="WP_010812374.1">
    <property type="nucleotide sequence ID" value="NC_010528.1"/>
</dbReference>
<dbReference type="SMR" id="B3R7E3"/>
<dbReference type="KEGG" id="cti:RALTA_A2918"/>
<dbReference type="eggNOG" id="COG0202">
    <property type="taxonomic scope" value="Bacteria"/>
</dbReference>
<dbReference type="HOGENOM" id="CLU_053084_0_0_4"/>
<dbReference type="BioCyc" id="CTAI977880:RALTA_RS14225-MONOMER"/>
<dbReference type="Proteomes" id="UP000001692">
    <property type="component" value="Chromosome 1"/>
</dbReference>
<dbReference type="GO" id="GO:0005737">
    <property type="term" value="C:cytoplasm"/>
    <property type="evidence" value="ECO:0007669"/>
    <property type="project" value="UniProtKB-ARBA"/>
</dbReference>
<dbReference type="GO" id="GO:0000428">
    <property type="term" value="C:DNA-directed RNA polymerase complex"/>
    <property type="evidence" value="ECO:0007669"/>
    <property type="project" value="UniProtKB-KW"/>
</dbReference>
<dbReference type="GO" id="GO:0003677">
    <property type="term" value="F:DNA binding"/>
    <property type="evidence" value="ECO:0007669"/>
    <property type="project" value="UniProtKB-UniRule"/>
</dbReference>
<dbReference type="GO" id="GO:0003899">
    <property type="term" value="F:DNA-directed RNA polymerase activity"/>
    <property type="evidence" value="ECO:0007669"/>
    <property type="project" value="UniProtKB-UniRule"/>
</dbReference>
<dbReference type="GO" id="GO:0046983">
    <property type="term" value="F:protein dimerization activity"/>
    <property type="evidence" value="ECO:0007669"/>
    <property type="project" value="InterPro"/>
</dbReference>
<dbReference type="GO" id="GO:0006351">
    <property type="term" value="P:DNA-templated transcription"/>
    <property type="evidence" value="ECO:0007669"/>
    <property type="project" value="UniProtKB-UniRule"/>
</dbReference>
<dbReference type="CDD" id="cd06928">
    <property type="entry name" value="RNAP_alpha_NTD"/>
    <property type="match status" value="1"/>
</dbReference>
<dbReference type="FunFam" id="1.10.150.20:FF:000001">
    <property type="entry name" value="DNA-directed RNA polymerase subunit alpha"/>
    <property type="match status" value="1"/>
</dbReference>
<dbReference type="FunFam" id="2.170.120.12:FF:000001">
    <property type="entry name" value="DNA-directed RNA polymerase subunit alpha"/>
    <property type="match status" value="1"/>
</dbReference>
<dbReference type="Gene3D" id="1.10.150.20">
    <property type="entry name" value="5' to 3' exonuclease, C-terminal subdomain"/>
    <property type="match status" value="1"/>
</dbReference>
<dbReference type="Gene3D" id="2.170.120.12">
    <property type="entry name" value="DNA-directed RNA polymerase, insert domain"/>
    <property type="match status" value="1"/>
</dbReference>
<dbReference type="Gene3D" id="3.30.1360.10">
    <property type="entry name" value="RNA polymerase, RBP11-like subunit"/>
    <property type="match status" value="1"/>
</dbReference>
<dbReference type="HAMAP" id="MF_00059">
    <property type="entry name" value="RNApol_bact_RpoA"/>
    <property type="match status" value="1"/>
</dbReference>
<dbReference type="InterPro" id="IPR011262">
    <property type="entry name" value="DNA-dir_RNA_pol_insert"/>
</dbReference>
<dbReference type="InterPro" id="IPR011263">
    <property type="entry name" value="DNA-dir_RNA_pol_RpoA/D/Rpb3"/>
</dbReference>
<dbReference type="InterPro" id="IPR011773">
    <property type="entry name" value="DNA-dir_RpoA"/>
</dbReference>
<dbReference type="InterPro" id="IPR036603">
    <property type="entry name" value="RBP11-like"/>
</dbReference>
<dbReference type="InterPro" id="IPR011260">
    <property type="entry name" value="RNAP_asu_C"/>
</dbReference>
<dbReference type="InterPro" id="IPR036643">
    <property type="entry name" value="RNApol_insert_sf"/>
</dbReference>
<dbReference type="NCBIfam" id="NF003513">
    <property type="entry name" value="PRK05182.1-2"/>
    <property type="match status" value="1"/>
</dbReference>
<dbReference type="NCBIfam" id="NF003519">
    <property type="entry name" value="PRK05182.2-5"/>
    <property type="match status" value="1"/>
</dbReference>
<dbReference type="NCBIfam" id="TIGR02027">
    <property type="entry name" value="rpoA"/>
    <property type="match status" value="1"/>
</dbReference>
<dbReference type="Pfam" id="PF01000">
    <property type="entry name" value="RNA_pol_A_bac"/>
    <property type="match status" value="1"/>
</dbReference>
<dbReference type="Pfam" id="PF03118">
    <property type="entry name" value="RNA_pol_A_CTD"/>
    <property type="match status" value="1"/>
</dbReference>
<dbReference type="Pfam" id="PF01193">
    <property type="entry name" value="RNA_pol_L"/>
    <property type="match status" value="1"/>
</dbReference>
<dbReference type="SMART" id="SM00662">
    <property type="entry name" value="RPOLD"/>
    <property type="match status" value="1"/>
</dbReference>
<dbReference type="SUPFAM" id="SSF47789">
    <property type="entry name" value="C-terminal domain of RNA polymerase alpha subunit"/>
    <property type="match status" value="1"/>
</dbReference>
<dbReference type="SUPFAM" id="SSF56553">
    <property type="entry name" value="Insert subdomain of RNA polymerase alpha subunit"/>
    <property type="match status" value="1"/>
</dbReference>
<dbReference type="SUPFAM" id="SSF55257">
    <property type="entry name" value="RBP11-like subunits of RNA polymerase"/>
    <property type="match status" value="1"/>
</dbReference>
<feature type="chain" id="PRO_1000091944" description="DNA-directed RNA polymerase subunit alpha">
    <location>
        <begin position="1"/>
        <end position="326"/>
    </location>
</feature>
<feature type="region of interest" description="Alpha N-terminal domain (alpha-NTD)" evidence="1">
    <location>
        <begin position="1"/>
        <end position="231"/>
    </location>
</feature>
<feature type="region of interest" description="Alpha C-terminal domain (alpha-CTD)" evidence="1">
    <location>
        <begin position="247"/>
        <end position="326"/>
    </location>
</feature>
<gene>
    <name evidence="1" type="primary">rpoA</name>
    <name type="ordered locus">RALTA_A2918</name>
</gene>
<sequence>MQTALLKPKIIAVEPLGDHHAKVVMEPFERGYGHTLGNALRRVLLSSMVGYAPTEVTIAGVVHEYSTIDGVQEDVVNLLLNLKGVVFKLHNRDEVTVSLRKDGEGVVTAADIELPHDVEIINPNHVIAHLSAGGKLDMQIKVEQGRGYVPGNVRKFGDESGKVIGRIVLDASFSPVRRVSYAVESARVEQRTDLDKLVMNIETDGVISPEEAIRQSARILVDQLSVFAALEGTESAAEAASSRTPQIDPILLRPVDDLELTVRSANCLKAENIYYIGDLIQRTENELLKTPNLGRKSLNEIKEVLASRGLTLGMKLENWPPAGLEK</sequence>
<protein>
    <recommendedName>
        <fullName evidence="1">DNA-directed RNA polymerase subunit alpha</fullName>
        <shortName evidence="1">RNAP subunit alpha</shortName>
        <ecNumber evidence="1">2.7.7.6</ecNumber>
    </recommendedName>
    <alternativeName>
        <fullName evidence="1">RNA polymerase subunit alpha</fullName>
    </alternativeName>
    <alternativeName>
        <fullName evidence="1">Transcriptase subunit alpha</fullName>
    </alternativeName>
</protein>
<name>RPOA_CUPTR</name>
<evidence type="ECO:0000255" key="1">
    <source>
        <dbReference type="HAMAP-Rule" id="MF_00059"/>
    </source>
</evidence>
<comment type="function">
    <text evidence="1">DNA-dependent RNA polymerase catalyzes the transcription of DNA into RNA using the four ribonucleoside triphosphates as substrates.</text>
</comment>
<comment type="catalytic activity">
    <reaction evidence="1">
        <text>RNA(n) + a ribonucleoside 5'-triphosphate = RNA(n+1) + diphosphate</text>
        <dbReference type="Rhea" id="RHEA:21248"/>
        <dbReference type="Rhea" id="RHEA-COMP:14527"/>
        <dbReference type="Rhea" id="RHEA-COMP:17342"/>
        <dbReference type="ChEBI" id="CHEBI:33019"/>
        <dbReference type="ChEBI" id="CHEBI:61557"/>
        <dbReference type="ChEBI" id="CHEBI:140395"/>
        <dbReference type="EC" id="2.7.7.6"/>
    </reaction>
</comment>
<comment type="subunit">
    <text evidence="1">Homodimer. The RNAP catalytic core consists of 2 alpha, 1 beta, 1 beta' and 1 omega subunit. When a sigma factor is associated with the core the holoenzyme is formed, which can initiate transcription.</text>
</comment>
<comment type="domain">
    <text evidence="1">The N-terminal domain is essential for RNAP assembly and basal transcription, whereas the C-terminal domain is involved in interaction with transcriptional regulators and with upstream promoter elements.</text>
</comment>
<comment type="similarity">
    <text evidence="1">Belongs to the RNA polymerase alpha chain family.</text>
</comment>
<accession>B3R7E3</accession>
<keyword id="KW-0240">DNA-directed RNA polymerase</keyword>
<keyword id="KW-0548">Nucleotidyltransferase</keyword>
<keyword id="KW-0804">Transcription</keyword>
<keyword id="KW-0808">Transferase</keyword>
<proteinExistence type="inferred from homology"/>
<organism>
    <name type="scientific">Cupriavidus taiwanensis (strain DSM 17343 / BCRC 17206 / CCUG 44338 / CIP 107171 / LMG 19424 / R1)</name>
    <name type="common">Ralstonia taiwanensis (strain LMG 19424)</name>
    <dbReference type="NCBI Taxonomy" id="977880"/>
    <lineage>
        <taxon>Bacteria</taxon>
        <taxon>Pseudomonadati</taxon>
        <taxon>Pseudomonadota</taxon>
        <taxon>Betaproteobacteria</taxon>
        <taxon>Burkholderiales</taxon>
        <taxon>Burkholderiaceae</taxon>
        <taxon>Cupriavidus</taxon>
    </lineage>
</organism>